<name>CJ090_MOUSE</name>
<accession>D2J0Y4</accession>
<feature type="chain" id="PRO_0000413487" description="(E2-independent) E3 ubiquitin-conjugating enzyme FATS">
    <location>
        <begin position="1"/>
        <end position="644"/>
    </location>
</feature>
<feature type="region of interest" description="Required for interaction with p53/TP53" evidence="7">
    <location>
        <begin position="1"/>
        <end position="67"/>
    </location>
</feature>
<feature type="region of interest" description="Disordered" evidence="4">
    <location>
        <begin position="62"/>
        <end position="83"/>
    </location>
</feature>
<feature type="region of interest" description="Required for interaction with HDAC1" evidence="5">
    <location>
        <begin position="67"/>
        <end position="175"/>
    </location>
</feature>
<feature type="region of interest" description="Disordered" evidence="4">
    <location>
        <begin position="305"/>
        <end position="349"/>
    </location>
</feature>
<feature type="region of interest" description="Disordered" evidence="4">
    <location>
        <begin position="367"/>
        <end position="413"/>
    </location>
</feature>
<feature type="region of interest" description="Disordered" evidence="4">
    <location>
        <begin position="475"/>
        <end position="507"/>
    </location>
</feature>
<feature type="region of interest" description="ALMS motif">
    <location>
        <begin position="516"/>
        <end position="644"/>
    </location>
</feature>
<feature type="coiled-coil region" evidence="3">
    <location>
        <begin position="598"/>
        <end position="629"/>
    </location>
</feature>
<feature type="compositionally biased region" description="Low complexity" evidence="4">
    <location>
        <begin position="398"/>
        <end position="410"/>
    </location>
</feature>
<feature type="compositionally biased region" description="Pro residues" evidence="4">
    <location>
        <begin position="481"/>
        <end position="492"/>
    </location>
</feature>
<feature type="mutagenesis site" description="No effect on p53/TP53 polyubiquitination." evidence="7">
    <original>C</original>
    <variation>G</variation>
    <location>
        <position position="118"/>
    </location>
</feature>
<feature type="mutagenesis site" description="No effect on p53/TP53 polyubiquitination." evidence="7">
    <original>C</original>
    <variation>G</variation>
    <location>
        <position position="202"/>
    </location>
</feature>
<feature type="mutagenesis site" description="Abolishes p53/TP53 polyubiquitination. No effect on interaction with p53/TP53." evidence="7">
    <original>C</original>
    <variation>G</variation>
    <location>
        <position position="211"/>
    </location>
</feature>
<feature type="mutagenesis site" description="No effect on p53/TP53 polyubiquitination." evidence="7">
    <original>C</original>
    <variation>G</variation>
    <location>
        <position position="247"/>
    </location>
</feature>
<organism>
    <name type="scientific">Mus musculus</name>
    <name type="common">Mouse</name>
    <dbReference type="NCBI Taxonomy" id="10090"/>
    <lineage>
        <taxon>Eukaryota</taxon>
        <taxon>Metazoa</taxon>
        <taxon>Chordata</taxon>
        <taxon>Craniata</taxon>
        <taxon>Vertebrata</taxon>
        <taxon>Euteleostomi</taxon>
        <taxon>Mammalia</taxon>
        <taxon>Eutheria</taxon>
        <taxon>Euarchontoglires</taxon>
        <taxon>Glires</taxon>
        <taxon>Rodentia</taxon>
        <taxon>Myomorpha</taxon>
        <taxon>Muroidea</taxon>
        <taxon>Muridae</taxon>
        <taxon>Murinae</taxon>
        <taxon>Mus</taxon>
        <taxon>Mus</taxon>
    </lineage>
</organism>
<protein>
    <recommendedName>
        <fullName evidence="10">(E2-independent) E3 ubiquitin-conjugating enzyme FATS</fullName>
        <ecNumber evidence="7">2.3.2.-</ecNumber>
    </recommendedName>
    <alternativeName>
        <fullName evidence="10">Centrosomal protein C10orf90 homolog</fullName>
    </alternativeName>
    <alternativeName>
        <fullName evidence="10">E2/E3 hybrid ubiquitin-protein ligase FATS</fullName>
    </alternativeName>
    <alternativeName>
        <fullName evidence="8 9">Fragile-site associated tumor suppressor homolog</fullName>
        <shortName evidence="8 9">FATS</shortName>
    </alternativeName>
</protein>
<gene>
    <name evidence="11" type="primary">D7Ertd443e</name>
    <name evidence="8 9" type="synonym">Fats</name>
</gene>
<sequence length="644" mass="71521">MISPVVISRLIDEKKSMENGAILPQAIAQPQLCPTKPALARRDGVSMHRRFALSPDRLGILTPSDDQGLETEPLSTGDNLGKGSHSGFSSITITARRVGPPASSLVWDTFRDPLCPKCKAKDALFQEPPVLAGDAHLCQHNRPFTCTESPSNGSVEGMKVFQAHSRLSARQDYWVTHTNDNEDSFSSDNSPSRKVPLVFSSCVHFRVSQQCPNAIYYLDKSLSVPLERPQIASPKMHRSVLSLSLRCSSHQLTADGVDSSANGEPISTALSQELSEGKQDLLGPQWGQPQGGHWKESPALVPVHLGSGTCPRTGSPPLENVKFADVGRNQVPVRKEKEDHATCTSSSHTNQLSIHIPGWSYRAETKVLSGSKKQQQEAQRTLPAFPVGQKTIKHFPPEGDSSPSSDGQPSILSESNERQHPYFMIPRVPLPGFYCPLQTGCASLQEDGAVQIETHFPKDYTCCDLVVKLKECEKNEDPTVTPEPSPATPSPSTPEGAQSSDPSEDSYEPLLASSMTLQEALEVHRPQFISRSQERLQKLKRMVQQRKTQQKESLGQKQSLLPVRANKKQFTIPHPLSDNLFKPKERCISEKEMHMRSKRIYNNLPEVKKKKEEQKKRMILQSNRLRAEVFKKQLLDQLLQRNAV</sequence>
<keyword id="KW-0175">Coiled coil</keyword>
<keyword id="KW-0963">Cytoplasm</keyword>
<keyword id="KW-0206">Cytoskeleton</keyword>
<keyword id="KW-1185">Reference proteome</keyword>
<keyword id="KW-0808">Transferase</keyword>
<keyword id="KW-0043">Tumor suppressor</keyword>
<keyword id="KW-0833">Ubl conjugation pathway</keyword>
<comment type="function">
    <text evidence="2 5 6 7">Tumor suppressor that is required to sustain G2/M checkpoint after DNA damage (PubMed:20154723, PubMed:20843368, PubMed:24240685). Acts as a p53/TP53 activator by inhibiting MDM2 binding to p53/TP53 and stimulating non-proteolytic polyubiquitination of p53/TP53. Exhibits ubiquitin ligase (E3) activity and assemble ubiquitin polymers through 'Lys-11'- (K11-), 'Lys-29'- (K29-) and 'Lys-63'- (K63)-linkages, independently of the ubiquitin-conjugating enzyme (E2). Promotes p53/TP53-dependent transcription of CDKN1A/p21, leading to robust checkpoint response (PubMed:24240685). Mediates CDKN1A/p21 protein stability in a ubiquitin-independent manner. Interacts with HDAC1 and prevents binding of HDAC1 to CDKN1A/p21 and facilitates the acetylation and stabilization of CDKN1A/p21 (PubMed:20154723). May have a role in the assembly of primary cilia (By similarity).</text>
</comment>
<comment type="subunit">
    <text evidence="5 7">Interacts with HDAC1; the interaction prevents binding of HDAC1 to CDKN1A/p21 and facilitates the acetylation and stabilization of CDKN1A/p21 (PubMed:20154723). Interacts with p53/TP53; the interaction inhibits binding of p53/TP53 and MDM2 (PubMed:24240685).</text>
</comment>
<comment type="subcellular location">
    <subcellularLocation>
        <location evidence="2">Cytoplasm</location>
    </subcellularLocation>
    <subcellularLocation>
        <location evidence="2">Cytoplasm</location>
        <location evidence="2">Cytoskeleton</location>
        <location evidence="2">Microtubule organizing center</location>
        <location evidence="2">Centrosome</location>
    </subcellularLocation>
    <text evidence="1 2">Localizes to the actin cytoskeleton in a proportion of cells. Colocalizes with centriolar acetylated tubulin (By similarity).</text>
</comment>
<comment type="tissue specificity">
    <text evidence="6">Highly expressed in testis. Weak expression found in brain, lung, heart, ovary, thymus, spleen and kidney.</text>
</comment>
<comment type="induction">
    <text evidence="6">Upon DNA damage by agents such as ionizing radiation, UV and actinomycin D. Activated by p53/TP53.</text>
</comment>
<reference key="1">
    <citation type="journal article" date="2010" name="Mol. Cancer">
        <title>FATS is a transcriptional target of p53 and associated with antitumor activity.</title>
        <authorList>
            <person name="Zhang X."/>
            <person name="Zhang Q."/>
            <person name="Zhang J."/>
            <person name="Qiu L."/>
            <person name="Yan S.S."/>
            <person name="Feng J."/>
            <person name="Sun Y."/>
            <person name="Huang X."/>
            <person name="Lu K.H."/>
            <person name="Li Z."/>
        </authorList>
    </citation>
    <scope>NUCLEOTIDE SEQUENCE [MRNA]</scope>
    <scope>FUNCTION</scope>
    <scope>TISSUE SPECIFICITY</scope>
    <scope>INDUCTION</scope>
    <source>
        <strain>C57BL/6J</strain>
        <tissue>Testis</tissue>
    </source>
</reference>
<reference key="2">
    <citation type="journal article" date="2009" name="PLoS Biol.">
        <title>Lineage-specific biology revealed by a finished genome assembly of the mouse.</title>
        <authorList>
            <person name="Church D.M."/>
            <person name="Goodstadt L."/>
            <person name="Hillier L.W."/>
            <person name="Zody M.C."/>
            <person name="Goldstein S."/>
            <person name="She X."/>
            <person name="Bult C.J."/>
            <person name="Agarwala R."/>
            <person name="Cherry J.L."/>
            <person name="DiCuccio M."/>
            <person name="Hlavina W."/>
            <person name="Kapustin Y."/>
            <person name="Meric P."/>
            <person name="Maglott D."/>
            <person name="Birtle Z."/>
            <person name="Marques A.C."/>
            <person name="Graves T."/>
            <person name="Zhou S."/>
            <person name="Teague B."/>
            <person name="Potamousis K."/>
            <person name="Churas C."/>
            <person name="Place M."/>
            <person name="Herschleb J."/>
            <person name="Runnheim R."/>
            <person name="Forrest D."/>
            <person name="Amos-Landgraf J."/>
            <person name="Schwartz D.C."/>
            <person name="Cheng Z."/>
            <person name="Lindblad-Toh K."/>
            <person name="Eichler E.E."/>
            <person name="Ponting C.P."/>
        </authorList>
    </citation>
    <scope>NUCLEOTIDE SEQUENCE [LARGE SCALE GENOMIC DNA]</scope>
    <source>
        <strain>C57BL/6J</strain>
    </source>
</reference>
<reference key="3">
    <citation type="submission" date="2005-07" db="EMBL/GenBank/DDBJ databases">
        <authorList>
            <person name="Mural R.J."/>
            <person name="Adams M.D."/>
            <person name="Myers E.W."/>
            <person name="Smith H.O."/>
            <person name="Venter J.C."/>
        </authorList>
    </citation>
    <scope>NUCLEOTIDE SEQUENCE [LARGE SCALE GENOMIC DNA]</scope>
</reference>
<reference key="4">
    <citation type="journal article" date="2010" name="Oncogene">
        <title>An HDAC1-binding domain within FATS bridges p21 turnover to radiation-induced tumorigenesis.</title>
        <authorList>
            <person name="Li Z."/>
            <person name="Zhang Q."/>
            <person name="Mao J.H."/>
            <person name="Weise A."/>
            <person name="Mrasek K."/>
            <person name="Fan X."/>
            <person name="Zhang X."/>
            <person name="Liehr T."/>
            <person name="Lu K.H."/>
            <person name="Balmain A."/>
            <person name="Cai W.W."/>
        </authorList>
    </citation>
    <scope>INTERACTION WITH HDAC1</scope>
    <scope>FUNCTION</scope>
</reference>
<reference key="5">
    <citation type="journal article" date="2014" name="Oncogene">
        <title>FATS is an E2-independent ubiquitin ligase that stabilizes p53 and promotes its activation in response to DNA damage.</title>
        <authorList>
            <person name="Yan S."/>
            <person name="Qiu L."/>
            <person name="Ma K."/>
            <person name="Zhang X."/>
            <person name="Zhao Y."/>
            <person name="Zhang J."/>
            <person name="Li X."/>
            <person name="Hao X."/>
            <person name="Li Z."/>
        </authorList>
    </citation>
    <scope>FUNCTION</scope>
    <scope>INTERACTION WITH TP53</scope>
    <scope>DOMAIN</scope>
    <scope>MUTAGENESIS OF CYS-118; CYS-202; CYS-211 AND CYS-247</scope>
</reference>
<dbReference type="EC" id="2.3.2.-" evidence="7"/>
<dbReference type="EMBL" id="GQ499374">
    <property type="protein sequence ID" value="ACZ64206.1"/>
    <property type="molecule type" value="mRNA"/>
</dbReference>
<dbReference type="EMBL" id="AC124369">
    <property type="status" value="NOT_ANNOTATED_CDS"/>
    <property type="molecule type" value="Genomic_DNA"/>
</dbReference>
<dbReference type="EMBL" id="AC126676">
    <property type="status" value="NOT_ANNOTATED_CDS"/>
    <property type="molecule type" value="Genomic_DNA"/>
</dbReference>
<dbReference type="EMBL" id="CH466531">
    <property type="protein sequence ID" value="EDL17791.1"/>
    <property type="molecule type" value="Genomic_DNA"/>
</dbReference>
<dbReference type="CCDS" id="CCDS57590.1"/>
<dbReference type="RefSeq" id="NP_001074800.1">
    <property type="nucleotide sequence ID" value="NM_001081331.2"/>
</dbReference>
<dbReference type="RefSeq" id="NP_001186870.1">
    <property type="nucleotide sequence ID" value="NM_001199941.1"/>
</dbReference>
<dbReference type="RefSeq" id="XP_011240206.1">
    <property type="nucleotide sequence ID" value="XM_011241904.4"/>
</dbReference>
<dbReference type="RefSeq" id="XP_011240207.1">
    <property type="nucleotide sequence ID" value="XM_011241905.4"/>
</dbReference>
<dbReference type="SMR" id="D2J0Y4"/>
<dbReference type="FunCoup" id="D2J0Y4">
    <property type="interactions" value="289"/>
</dbReference>
<dbReference type="STRING" id="10090.ENSMUSP00000134479"/>
<dbReference type="GlyGen" id="D2J0Y4">
    <property type="glycosylation" value="2 sites"/>
</dbReference>
<dbReference type="iPTMnet" id="D2J0Y4"/>
<dbReference type="PhosphoSitePlus" id="D2J0Y4"/>
<dbReference type="PaxDb" id="10090-ENSMUSP00000134479"/>
<dbReference type="PeptideAtlas" id="D2J0Y4"/>
<dbReference type="ProteomicsDB" id="285449"/>
<dbReference type="Antibodypedia" id="48773">
    <property type="antibodies" value="26 antibodies from 9 providers"/>
</dbReference>
<dbReference type="Ensembl" id="ENSMUST00000094002.10">
    <property type="protein sequence ID" value="ENSMUSP00000091539.4"/>
    <property type="gene ID" value="ENSMUSG00000030994.17"/>
</dbReference>
<dbReference type="GeneID" id="71007"/>
<dbReference type="KEGG" id="mmu:71007"/>
<dbReference type="UCSC" id="uc009kds.1">
    <property type="organism name" value="mouse"/>
</dbReference>
<dbReference type="AGR" id="MGI:1196431"/>
<dbReference type="CTD" id="71007"/>
<dbReference type="MGI" id="MGI:1196431">
    <property type="gene designation" value="D7Ertd443e"/>
</dbReference>
<dbReference type="VEuPathDB" id="HostDB:ENSMUSG00000030994"/>
<dbReference type="eggNOG" id="ENOG502S6G8">
    <property type="taxonomic scope" value="Eukaryota"/>
</dbReference>
<dbReference type="GeneTree" id="ENSGT00940000153123"/>
<dbReference type="InParanoid" id="D2J0Y4"/>
<dbReference type="OMA" id="HEYWVTH"/>
<dbReference type="OrthoDB" id="8899035at2759"/>
<dbReference type="PhylomeDB" id="D2J0Y4"/>
<dbReference type="BioGRID-ORCS" id="71007">
    <property type="hits" value="1 hit in 76 CRISPR screens"/>
</dbReference>
<dbReference type="ChiTaRS" id="D7Ertd443e">
    <property type="organism name" value="mouse"/>
</dbReference>
<dbReference type="PRO" id="PR:D2J0Y4"/>
<dbReference type="Proteomes" id="UP000000589">
    <property type="component" value="Chromosome 7"/>
</dbReference>
<dbReference type="RNAct" id="D2J0Y4">
    <property type="molecule type" value="protein"/>
</dbReference>
<dbReference type="Bgee" id="ENSMUSG00000030994">
    <property type="expression patterns" value="Expressed in animal zygote and 78 other cell types or tissues"/>
</dbReference>
<dbReference type="ExpressionAtlas" id="D2J0Y4">
    <property type="expression patterns" value="baseline and differential"/>
</dbReference>
<dbReference type="GO" id="GO:0005813">
    <property type="term" value="C:centrosome"/>
    <property type="evidence" value="ECO:0007669"/>
    <property type="project" value="UniProtKB-SubCell"/>
</dbReference>
<dbReference type="GO" id="GO:0005737">
    <property type="term" value="C:cytoplasm"/>
    <property type="evidence" value="ECO:0007669"/>
    <property type="project" value="UniProtKB-SubCell"/>
</dbReference>
<dbReference type="GO" id="GO:0042826">
    <property type="term" value="F:histone deacetylase binding"/>
    <property type="evidence" value="ECO:0000314"/>
    <property type="project" value="UniProtKB"/>
</dbReference>
<dbReference type="GO" id="GO:0061630">
    <property type="term" value="F:ubiquitin protein ligase activity"/>
    <property type="evidence" value="ECO:0000314"/>
    <property type="project" value="UniProtKB"/>
</dbReference>
<dbReference type="GO" id="GO:0006974">
    <property type="term" value="P:DNA damage response"/>
    <property type="evidence" value="ECO:0000314"/>
    <property type="project" value="UniProtKB"/>
</dbReference>
<dbReference type="GO" id="GO:0007095">
    <property type="term" value="P:mitotic G2 DNA damage checkpoint signaling"/>
    <property type="evidence" value="ECO:0000314"/>
    <property type="project" value="UniProtKB"/>
</dbReference>
<dbReference type="GO" id="GO:0030308">
    <property type="term" value="P:negative regulation of cell growth"/>
    <property type="evidence" value="ECO:0000314"/>
    <property type="project" value="UniProtKB"/>
</dbReference>
<dbReference type="GO" id="GO:0000209">
    <property type="term" value="P:protein polyubiquitination"/>
    <property type="evidence" value="ECO:0000314"/>
    <property type="project" value="UniProtKB"/>
</dbReference>
<dbReference type="GO" id="GO:0050821">
    <property type="term" value="P:protein stabilization"/>
    <property type="evidence" value="ECO:0000314"/>
    <property type="project" value="UniProtKB"/>
</dbReference>
<dbReference type="GO" id="GO:0016567">
    <property type="term" value="P:protein ubiquitination"/>
    <property type="evidence" value="ECO:0000314"/>
    <property type="project" value="UniProtKB"/>
</dbReference>
<dbReference type="GO" id="GO:0010212">
    <property type="term" value="P:response to ionizing radiation"/>
    <property type="evidence" value="ECO:0000314"/>
    <property type="project" value="UniProtKB"/>
</dbReference>
<dbReference type="GO" id="GO:0009411">
    <property type="term" value="P:response to UV"/>
    <property type="evidence" value="ECO:0000314"/>
    <property type="project" value="UniProtKB"/>
</dbReference>
<dbReference type="InterPro" id="IPR029299">
    <property type="entry name" value="ALMS_motif"/>
</dbReference>
<dbReference type="InterPro" id="IPR041179">
    <property type="entry name" value="C10orf90_N"/>
</dbReference>
<dbReference type="PANTHER" id="PTHR21553:SF24">
    <property type="entry name" value="(E2-INDEPENDENT) E3 UBIQUITIN-CONJUGATING ENZYME FATS"/>
    <property type="match status" value="1"/>
</dbReference>
<dbReference type="PANTHER" id="PTHR21553">
    <property type="entry name" value="ALMS1-RELATED"/>
    <property type="match status" value="1"/>
</dbReference>
<dbReference type="Pfam" id="PF15309">
    <property type="entry name" value="ALMS_motif"/>
    <property type="match status" value="1"/>
</dbReference>
<dbReference type="Pfam" id="PF17730">
    <property type="entry name" value="Centro_C10orf90"/>
    <property type="match status" value="1"/>
</dbReference>
<proteinExistence type="evidence at protein level"/>
<evidence type="ECO:0000250" key="1"/>
<evidence type="ECO:0000250" key="2">
    <source>
        <dbReference type="UniProtKB" id="Q96M02"/>
    </source>
</evidence>
<evidence type="ECO:0000255" key="3"/>
<evidence type="ECO:0000256" key="4">
    <source>
        <dbReference type="SAM" id="MobiDB-lite"/>
    </source>
</evidence>
<evidence type="ECO:0000269" key="5">
    <source>
    </source>
</evidence>
<evidence type="ECO:0000269" key="6">
    <source>
    </source>
</evidence>
<evidence type="ECO:0000269" key="7">
    <source>
    </source>
</evidence>
<evidence type="ECO:0000303" key="8">
    <source>
    </source>
</evidence>
<evidence type="ECO:0000303" key="9">
    <source>
    </source>
</evidence>
<evidence type="ECO:0000305" key="10"/>
<evidence type="ECO:0000312" key="11">
    <source>
        <dbReference type="MGI" id="MGI:1196431"/>
    </source>
</evidence>